<evidence type="ECO:0000250" key="1"/>
<evidence type="ECO:0000255" key="2"/>
<evidence type="ECO:0000305" key="3"/>
<protein>
    <recommendedName>
        <fullName>Thymidylate kinase</fullName>
        <ecNumber>2.7.4.9</ecNumber>
    </recommendedName>
    <alternativeName>
        <fullName>dTMP kinase</fullName>
    </alternativeName>
</protein>
<dbReference type="EC" id="2.7.4.9"/>
<dbReference type="EMBL" id="AE004439">
    <property type="protein sequence ID" value="AAK03757.1"/>
    <property type="status" value="ALT_INIT"/>
    <property type="molecule type" value="Genomic_DNA"/>
</dbReference>
<dbReference type="RefSeq" id="WP_005718577.1">
    <property type="nucleotide sequence ID" value="NC_002663.1"/>
</dbReference>
<dbReference type="SMR" id="Q9CKE9"/>
<dbReference type="STRING" id="272843.PM1673"/>
<dbReference type="EnsemblBacteria" id="AAK03757">
    <property type="protein sequence ID" value="AAK03757"/>
    <property type="gene ID" value="PM1673"/>
</dbReference>
<dbReference type="KEGG" id="pmu:PM1673"/>
<dbReference type="PATRIC" id="fig|272843.6.peg.1693"/>
<dbReference type="HOGENOM" id="CLU_049131_0_1_6"/>
<dbReference type="OrthoDB" id="9774907at2"/>
<dbReference type="Proteomes" id="UP000000809">
    <property type="component" value="Chromosome"/>
</dbReference>
<dbReference type="GO" id="GO:0005829">
    <property type="term" value="C:cytosol"/>
    <property type="evidence" value="ECO:0007669"/>
    <property type="project" value="TreeGrafter"/>
</dbReference>
<dbReference type="GO" id="GO:0005524">
    <property type="term" value="F:ATP binding"/>
    <property type="evidence" value="ECO:0007669"/>
    <property type="project" value="UniProtKB-UniRule"/>
</dbReference>
<dbReference type="GO" id="GO:0004798">
    <property type="term" value="F:dTMP kinase activity"/>
    <property type="evidence" value="ECO:0007669"/>
    <property type="project" value="UniProtKB-UniRule"/>
</dbReference>
<dbReference type="GO" id="GO:0006233">
    <property type="term" value="P:dTDP biosynthetic process"/>
    <property type="evidence" value="ECO:0007669"/>
    <property type="project" value="InterPro"/>
</dbReference>
<dbReference type="GO" id="GO:0006235">
    <property type="term" value="P:dTTP biosynthetic process"/>
    <property type="evidence" value="ECO:0007669"/>
    <property type="project" value="UniProtKB-UniRule"/>
</dbReference>
<dbReference type="GO" id="GO:0006227">
    <property type="term" value="P:dUDP biosynthetic process"/>
    <property type="evidence" value="ECO:0007669"/>
    <property type="project" value="TreeGrafter"/>
</dbReference>
<dbReference type="CDD" id="cd01672">
    <property type="entry name" value="TMPK"/>
    <property type="match status" value="1"/>
</dbReference>
<dbReference type="FunFam" id="3.40.50.300:FF:000321">
    <property type="entry name" value="Thymidylate kinase"/>
    <property type="match status" value="1"/>
</dbReference>
<dbReference type="Gene3D" id="3.40.50.300">
    <property type="entry name" value="P-loop containing nucleotide triphosphate hydrolases"/>
    <property type="match status" value="1"/>
</dbReference>
<dbReference type="HAMAP" id="MF_00165">
    <property type="entry name" value="Thymidylate_kinase"/>
    <property type="match status" value="1"/>
</dbReference>
<dbReference type="InterPro" id="IPR027417">
    <property type="entry name" value="P-loop_NTPase"/>
</dbReference>
<dbReference type="InterPro" id="IPR039430">
    <property type="entry name" value="Thymidylate_kin-like_dom"/>
</dbReference>
<dbReference type="InterPro" id="IPR018095">
    <property type="entry name" value="Thymidylate_kin_CS"/>
</dbReference>
<dbReference type="InterPro" id="IPR018094">
    <property type="entry name" value="Thymidylate_kinase"/>
</dbReference>
<dbReference type="NCBIfam" id="TIGR00041">
    <property type="entry name" value="DTMP_kinase"/>
    <property type="match status" value="1"/>
</dbReference>
<dbReference type="PANTHER" id="PTHR10344">
    <property type="entry name" value="THYMIDYLATE KINASE"/>
    <property type="match status" value="1"/>
</dbReference>
<dbReference type="PANTHER" id="PTHR10344:SF4">
    <property type="entry name" value="UMP-CMP KINASE 2, MITOCHONDRIAL"/>
    <property type="match status" value="1"/>
</dbReference>
<dbReference type="Pfam" id="PF02223">
    <property type="entry name" value="Thymidylate_kin"/>
    <property type="match status" value="1"/>
</dbReference>
<dbReference type="SUPFAM" id="SSF52540">
    <property type="entry name" value="P-loop containing nucleoside triphosphate hydrolases"/>
    <property type="match status" value="1"/>
</dbReference>
<dbReference type="PROSITE" id="PS01331">
    <property type="entry name" value="THYMIDYLATE_KINASE"/>
    <property type="match status" value="1"/>
</dbReference>
<reference key="1">
    <citation type="journal article" date="2001" name="Proc. Natl. Acad. Sci. U.S.A.">
        <title>Complete genomic sequence of Pasteurella multocida Pm70.</title>
        <authorList>
            <person name="May B.J."/>
            <person name="Zhang Q."/>
            <person name="Li L.L."/>
            <person name="Paustian M.L."/>
            <person name="Whittam T.S."/>
            <person name="Kapur V."/>
        </authorList>
    </citation>
    <scope>NUCLEOTIDE SEQUENCE [LARGE SCALE GENOMIC DNA]</scope>
    <source>
        <strain>Pm70</strain>
    </source>
</reference>
<sequence length="209" mass="23480">MTTGKFIVLEGIEGAGKTTARDSIVRALHAHGIHDIVFTREPGGTPLAEKLRQLIKHETEEPVTDKAELLMLYAARIQLVENVIKPALAQGKWVIGDRHDMSSQAYQGGGRQLDQHLLHTLKQTILGEFEPDLTLYLDIDPVLGLSRAKGRGALDRIEQQNLDFFHRTRQRYQELVRHNPKAVTIDASQTMSKVAEDVESAIETWLTTR</sequence>
<keyword id="KW-0067">ATP-binding</keyword>
<keyword id="KW-0418">Kinase</keyword>
<keyword id="KW-0545">Nucleotide biosynthesis</keyword>
<keyword id="KW-0547">Nucleotide-binding</keyword>
<keyword id="KW-1185">Reference proteome</keyword>
<keyword id="KW-0808">Transferase</keyword>
<comment type="function">
    <text evidence="1">Phosphorylation of dTMP to form dTDP in both de novo and salvage pathways of dTTP synthesis.</text>
</comment>
<comment type="catalytic activity">
    <reaction>
        <text>dTMP + ATP = dTDP + ADP</text>
        <dbReference type="Rhea" id="RHEA:13517"/>
        <dbReference type="ChEBI" id="CHEBI:30616"/>
        <dbReference type="ChEBI" id="CHEBI:58369"/>
        <dbReference type="ChEBI" id="CHEBI:63528"/>
        <dbReference type="ChEBI" id="CHEBI:456216"/>
        <dbReference type="EC" id="2.7.4.9"/>
    </reaction>
</comment>
<comment type="similarity">
    <text evidence="3">Belongs to the thymidylate kinase family.</text>
</comment>
<comment type="sequence caution" evidence="3">
    <conflict type="erroneous initiation">
        <sequence resource="EMBL-CDS" id="AAK03757"/>
    </conflict>
</comment>
<feature type="chain" id="PRO_0000155317" description="Thymidylate kinase">
    <location>
        <begin position="1"/>
        <end position="209"/>
    </location>
</feature>
<feature type="binding site" evidence="2">
    <location>
        <begin position="11"/>
        <end position="18"/>
    </location>
    <ligand>
        <name>ATP</name>
        <dbReference type="ChEBI" id="CHEBI:30616"/>
    </ligand>
</feature>
<accession>Q9CKE9</accession>
<name>KTHY_PASMU</name>
<organism>
    <name type="scientific">Pasteurella multocida (strain Pm70)</name>
    <dbReference type="NCBI Taxonomy" id="272843"/>
    <lineage>
        <taxon>Bacteria</taxon>
        <taxon>Pseudomonadati</taxon>
        <taxon>Pseudomonadota</taxon>
        <taxon>Gammaproteobacteria</taxon>
        <taxon>Pasteurellales</taxon>
        <taxon>Pasteurellaceae</taxon>
        <taxon>Pasteurella</taxon>
    </lineage>
</organism>
<gene>
    <name type="primary">tmk</name>
    <name type="ordered locus">PM1673</name>
</gene>
<proteinExistence type="inferred from homology"/>